<proteinExistence type="evidence at protein level"/>
<name>INIB_MYCTU</name>
<protein>
    <recommendedName>
        <fullName>Isoniazid-induced protein IniB</fullName>
    </recommendedName>
</protein>
<organism>
    <name type="scientific">Mycobacterium tuberculosis (strain ATCC 25618 / H37Rv)</name>
    <dbReference type="NCBI Taxonomy" id="83332"/>
    <lineage>
        <taxon>Bacteria</taxon>
        <taxon>Bacillati</taxon>
        <taxon>Actinomycetota</taxon>
        <taxon>Actinomycetes</taxon>
        <taxon>Mycobacteriales</taxon>
        <taxon>Mycobacteriaceae</taxon>
        <taxon>Mycobacterium</taxon>
        <taxon>Mycobacterium tuberculosis complex</taxon>
    </lineage>
</organism>
<sequence>MTSLIDYILSLFRSEDAARSFVAAPGRAMTSAGLIDIAPHQISSVAANVVPGLNLGAGDPMSGLRQAVAARHGFAQDVANVGFAGDAGAGVASVITTDVGAGLASGLGAGFLGQGGLALAASSGGFGGQVGLAAQVGLGFTAVIEAEVGAQVGAGLGIGTGLGAQAGMGFGGGVGLGLGGQAGGVIGGSAAGAIGAGVGGRLGGNGQIGVAGQGAVGAGVGAGVGGQAGIASQIGVSAGGGLGGVGNVSGLTGVSSNAVLASNASGQAGLIASEGAALNGAAMPHLSGPLAGVGVGGQAGAAGGAGLGFGAVGHPTPQPAALGAAGVVAKTEAAAGVVGGVGGATAAGVGGAHGDILGHEGAALGSVDTVNAGVTPVEHGLVLPSGPLIHGGTGGYGGMNPPVTDAPAPQVPARAQPMTTAAEHTPAVTQPQHTPVEPPVHDKPPSHSVFDVGHEPPVTHTPPAPIELPSYGLFGLPGF</sequence>
<keyword id="KW-1185">Reference proteome</keyword>
<feature type="chain" id="PRO_0000390792" description="Isoniazid-induced protein IniB">
    <location>
        <begin position="1"/>
        <end position="479"/>
    </location>
</feature>
<feature type="region of interest" description="Disordered" evidence="1">
    <location>
        <begin position="416"/>
        <end position="464"/>
    </location>
</feature>
<comment type="induction">
    <text evidence="2 3">Specifically induced by a broad range of inhibitors of cell wall biosynthesis, including antibiotics that inhibit the synthesis of peptidoglycan (ampicillin), arabinogalactam (ethambutol), mycolic acids (isoniazid, ethionamide) and fatty acids (5-chloropyrazinamide). Down-regulated by the nucleoid-associated protein Lsr2.</text>
</comment>
<reference key="1">
    <citation type="journal article" date="1998" name="Nature">
        <title>Deciphering the biology of Mycobacterium tuberculosis from the complete genome sequence.</title>
        <authorList>
            <person name="Cole S.T."/>
            <person name="Brosch R."/>
            <person name="Parkhill J."/>
            <person name="Garnier T."/>
            <person name="Churcher C.M."/>
            <person name="Harris D.E."/>
            <person name="Gordon S.V."/>
            <person name="Eiglmeier K."/>
            <person name="Gas S."/>
            <person name="Barry C.E. III"/>
            <person name="Tekaia F."/>
            <person name="Badcock K."/>
            <person name="Basham D."/>
            <person name="Brown D."/>
            <person name="Chillingworth T."/>
            <person name="Connor R."/>
            <person name="Davies R.M."/>
            <person name="Devlin K."/>
            <person name="Feltwell T."/>
            <person name="Gentles S."/>
            <person name="Hamlin N."/>
            <person name="Holroyd S."/>
            <person name="Hornsby T."/>
            <person name="Jagels K."/>
            <person name="Krogh A."/>
            <person name="McLean J."/>
            <person name="Moule S."/>
            <person name="Murphy L.D."/>
            <person name="Oliver S."/>
            <person name="Osborne J."/>
            <person name="Quail M.A."/>
            <person name="Rajandream M.A."/>
            <person name="Rogers J."/>
            <person name="Rutter S."/>
            <person name="Seeger K."/>
            <person name="Skelton S."/>
            <person name="Squares S."/>
            <person name="Squares R."/>
            <person name="Sulston J.E."/>
            <person name="Taylor K."/>
            <person name="Whitehead S."/>
            <person name="Barrell B.G."/>
        </authorList>
    </citation>
    <scope>NUCLEOTIDE SEQUENCE [LARGE SCALE GENOMIC DNA]</scope>
    <source>
        <strain>ATCC 25618 / H37Rv</strain>
    </source>
</reference>
<reference key="2">
    <citation type="journal article" date="2000" name="J. Bacteriol.">
        <title>Characterization of the Mycobacterium tuberculosis iniBAC promoter, a promoter that responds to cell wall biosynthesis inhibition.</title>
        <authorList>
            <person name="Alland D."/>
            <person name="Steyn A.J."/>
            <person name="Weisbrod T."/>
            <person name="Aldrich K."/>
            <person name="Jacobs W.R. Jr."/>
        </authorList>
    </citation>
    <scope>INDUCTION</scope>
</reference>
<reference key="3">
    <citation type="journal article" date="2007" name="PLoS Pathog.">
        <title>Transcriptional regulation of multi-drug tolerance and antibiotic-induced responses by the histone-like protein Lsr2 in M. tuberculosis.</title>
        <authorList>
            <person name="Colangeli R."/>
            <person name="Helb D."/>
            <person name="Vilcheze C."/>
            <person name="Hazbon M.H."/>
            <person name="Lee C.G."/>
            <person name="Safi H."/>
            <person name="Sayers B."/>
            <person name="Sardone I."/>
            <person name="Jones M.B."/>
            <person name="Fleischmann R.D."/>
            <person name="Peterson S.N."/>
            <person name="Jacobs W.R. Jr."/>
            <person name="Alland D."/>
        </authorList>
    </citation>
    <scope>INDUCTION</scope>
    <source>
        <strain>ATCC 25618 / H37Rv</strain>
    </source>
</reference>
<reference key="4">
    <citation type="journal article" date="2011" name="Mol. Cell. Proteomics">
        <title>Proteogenomic analysis of Mycobacterium tuberculosis by high resolution mass spectrometry.</title>
        <authorList>
            <person name="Kelkar D.S."/>
            <person name="Kumar D."/>
            <person name="Kumar P."/>
            <person name="Balakrishnan L."/>
            <person name="Muthusamy B."/>
            <person name="Yadav A.K."/>
            <person name="Shrivastava P."/>
            <person name="Marimuthu A."/>
            <person name="Anand S."/>
            <person name="Sundaram H."/>
            <person name="Kingsbury R."/>
            <person name="Harsha H.C."/>
            <person name="Nair B."/>
            <person name="Prasad T.S."/>
            <person name="Chauhan D.S."/>
            <person name="Katoch K."/>
            <person name="Katoch V.M."/>
            <person name="Kumar P."/>
            <person name="Chaerkady R."/>
            <person name="Ramachandran S."/>
            <person name="Dash D."/>
            <person name="Pandey A."/>
        </authorList>
    </citation>
    <scope>IDENTIFICATION BY MASS SPECTROMETRY [LARGE SCALE ANALYSIS]</scope>
    <source>
        <strain>ATCC 25618 / H37Rv</strain>
    </source>
</reference>
<gene>
    <name type="primary">iniB</name>
    <name type="ordered locus">Rv0341</name>
</gene>
<dbReference type="EMBL" id="AL123456">
    <property type="protein sequence ID" value="CCP43071.1"/>
    <property type="molecule type" value="Genomic_DNA"/>
</dbReference>
<dbReference type="PIR" id="F70573">
    <property type="entry name" value="F70573"/>
</dbReference>
<dbReference type="RefSeq" id="NP_214855.1">
    <property type="nucleotide sequence ID" value="NC_000962.3"/>
</dbReference>
<dbReference type="RefSeq" id="WP_003901837.1">
    <property type="nucleotide sequence ID" value="NZ_KK339370.1"/>
</dbReference>
<dbReference type="STRING" id="83332.Rv0341"/>
<dbReference type="TCDB" id="9.B.282.1.1">
    <property type="family name" value="the isoniazid-resistance (iniabc) family"/>
</dbReference>
<dbReference type="PaxDb" id="83332-Rv0341"/>
<dbReference type="DNASU" id="886518"/>
<dbReference type="GeneID" id="45424307"/>
<dbReference type="GeneID" id="886518"/>
<dbReference type="KEGG" id="mtu:Rv0341"/>
<dbReference type="KEGG" id="mtv:RVBD_0341"/>
<dbReference type="PATRIC" id="fig|83332.111.peg.377"/>
<dbReference type="TubercuList" id="Rv0341"/>
<dbReference type="eggNOG" id="ENOG5032WSK">
    <property type="taxonomic scope" value="Bacteria"/>
</dbReference>
<dbReference type="InParanoid" id="P9WJ97"/>
<dbReference type="OrthoDB" id="4753796at2"/>
<dbReference type="PHI-base" id="PHI:10413"/>
<dbReference type="Proteomes" id="UP000001584">
    <property type="component" value="Chromosome"/>
</dbReference>
<dbReference type="InterPro" id="IPR049709">
    <property type="entry name" value="IniB-like_N"/>
</dbReference>
<dbReference type="NCBIfam" id="NF038175">
    <property type="entry name" value="IniB_NTERM"/>
    <property type="match status" value="1"/>
</dbReference>
<accession>P9WJ97</accession>
<accession>L0T3D4</accession>
<accession>O06292</accession>
<accession>Q8VKM5</accession>
<evidence type="ECO:0000256" key="1">
    <source>
        <dbReference type="SAM" id="MobiDB-lite"/>
    </source>
</evidence>
<evidence type="ECO:0000269" key="2">
    <source>
    </source>
</evidence>
<evidence type="ECO:0000269" key="3">
    <source>
    </source>
</evidence>